<reference key="1">
    <citation type="submission" date="2005-07" db="EMBL/GenBank/DDBJ databases">
        <title>Complete sequence of Synechococcus sp. CC9605.</title>
        <authorList>
            <consortium name="US DOE Joint Genome Institute"/>
            <person name="Copeland A."/>
            <person name="Lucas S."/>
            <person name="Lapidus A."/>
            <person name="Barry K."/>
            <person name="Detter J.C."/>
            <person name="Glavina T."/>
            <person name="Hammon N."/>
            <person name="Israni S."/>
            <person name="Pitluck S."/>
            <person name="Schmutz J."/>
            <person name="Martinez M."/>
            <person name="Larimer F."/>
            <person name="Land M."/>
            <person name="Kyrpides N."/>
            <person name="Ivanova N."/>
            <person name="Richardson P."/>
        </authorList>
    </citation>
    <scope>NUCLEOTIDE SEQUENCE [LARGE SCALE GENOMIC DNA]</scope>
    <source>
        <strain>CC9605</strain>
    </source>
</reference>
<comment type="similarity">
    <text evidence="1">Belongs to the UPF0367 family.</text>
</comment>
<organism>
    <name type="scientific">Synechococcus sp. (strain CC9605)</name>
    <dbReference type="NCBI Taxonomy" id="110662"/>
    <lineage>
        <taxon>Bacteria</taxon>
        <taxon>Bacillati</taxon>
        <taxon>Cyanobacteriota</taxon>
        <taxon>Cyanophyceae</taxon>
        <taxon>Synechococcales</taxon>
        <taxon>Synechococcaceae</taxon>
        <taxon>Synechococcus</taxon>
    </lineage>
</organism>
<feature type="chain" id="PRO_0000240506" description="UPF0367 protein Syncc9605_2376">
    <location>
        <begin position="1"/>
        <end position="110"/>
    </location>
</feature>
<protein>
    <recommendedName>
        <fullName evidence="1">UPF0367 protein Syncc9605_2376</fullName>
    </recommendedName>
</protein>
<proteinExistence type="inferred from homology"/>
<dbReference type="EMBL" id="CP000110">
    <property type="protein sequence ID" value="ABB36108.1"/>
    <property type="molecule type" value="Genomic_DNA"/>
</dbReference>
<dbReference type="STRING" id="110662.Syncc9605_2376"/>
<dbReference type="KEGG" id="syd:Syncc9605_2376"/>
<dbReference type="eggNOG" id="ENOG5032YB3">
    <property type="taxonomic scope" value="Bacteria"/>
</dbReference>
<dbReference type="HOGENOM" id="CLU_180777_0_0_3"/>
<dbReference type="HAMAP" id="MF_01360">
    <property type="entry name" value="UPF0367"/>
    <property type="match status" value="1"/>
</dbReference>
<dbReference type="InterPro" id="IPR020885">
    <property type="entry name" value="UPF0367"/>
</dbReference>
<dbReference type="NCBIfam" id="NF010236">
    <property type="entry name" value="PRK13683.1"/>
    <property type="match status" value="1"/>
</dbReference>
<sequence length="110" mass="12122">MRIFGPTGCRSLREDDPSLLSNAVYVIELALRMSPVPVSVQRKEHSDAEALYQQIRQALENGQPRLMELTCEKVEGKKVTLLVSEVLAVQLYEKAAAAGGSKRPGFSFDS</sequence>
<name>Y2376_SYNSC</name>
<gene>
    <name type="ordered locus">Syncc9605_2376</name>
</gene>
<accession>Q3AH24</accession>
<evidence type="ECO:0000255" key="1">
    <source>
        <dbReference type="HAMAP-Rule" id="MF_01360"/>
    </source>
</evidence>